<proteinExistence type="evidence at protein level"/>
<feature type="chain" id="PRO_0000072102" description="Spermatogenesis-associated protein 4">
    <location>
        <begin position="1"/>
        <end position="295"/>
    </location>
</feature>
<feature type="domain" description="Calponin-homology (CH)" evidence="2">
    <location>
        <begin position="48"/>
        <end position="154"/>
    </location>
</feature>
<feature type="region of interest" description="Disordered" evidence="3">
    <location>
        <begin position="1"/>
        <end position="34"/>
    </location>
</feature>
<feature type="region of interest" description="Disordered" evidence="3">
    <location>
        <begin position="251"/>
        <end position="295"/>
    </location>
</feature>
<feature type="compositionally biased region" description="Basic and acidic residues" evidence="3">
    <location>
        <begin position="270"/>
        <end position="282"/>
    </location>
</feature>
<feature type="compositionally biased region" description="Polar residues" evidence="3">
    <location>
        <begin position="284"/>
        <end position="295"/>
    </location>
</feature>
<name>SPAT4_MOUSE</name>
<accession>Q8K3V1</accession>
<accession>Q923U8</accession>
<organism>
    <name type="scientific">Mus musculus</name>
    <name type="common">Mouse</name>
    <dbReference type="NCBI Taxonomy" id="10090"/>
    <lineage>
        <taxon>Eukaryota</taxon>
        <taxon>Metazoa</taxon>
        <taxon>Chordata</taxon>
        <taxon>Craniata</taxon>
        <taxon>Vertebrata</taxon>
        <taxon>Euteleostomi</taxon>
        <taxon>Mammalia</taxon>
        <taxon>Eutheria</taxon>
        <taxon>Euarchontoglires</taxon>
        <taxon>Glires</taxon>
        <taxon>Rodentia</taxon>
        <taxon>Myomorpha</taxon>
        <taxon>Muroidea</taxon>
        <taxon>Muridae</taxon>
        <taxon>Murinae</taxon>
        <taxon>Mus</taxon>
        <taxon>Mus</taxon>
    </lineage>
</organism>
<keyword id="KW-0539">Nucleus</keyword>
<keyword id="KW-1185">Reference proteome</keyword>
<comment type="function">
    <text evidence="1">May play a role in apoptosis regulation.</text>
</comment>
<comment type="interaction">
    <interactant intactId="EBI-7067375">
        <id>Q8K3V1</id>
    </interactant>
    <interactant intactId="EBI-1172267">
        <id>Q9CQP2</id>
        <label>Trappc2</label>
    </interactant>
    <organismsDiffer>false</organismsDiffer>
    <experiments>3</experiments>
</comment>
<comment type="subcellular location">
    <subcellularLocation>
        <location evidence="1">Nucleus</location>
    </subcellularLocation>
</comment>
<comment type="tissue specificity">
    <text evidence="4">Testis.</text>
</comment>
<reference key="1">
    <citation type="journal article" date="2002" name="Sheng Wu Hua Xue Yu Sheng Wu Wu Li Xue Bao">
        <title>Molecular cloning of SRG2, a mouse testis spermatocyte apoptosis-related gene.</title>
        <authorList>
            <person name="Liu S.F."/>
            <person name="Li L.Y."/>
            <person name="Fu J.J."/>
            <person name="Liu G."/>
            <person name="Xing X.W."/>
            <person name="Lu G.X."/>
        </authorList>
    </citation>
    <scope>NUCLEOTIDE SEQUENCE [MRNA]</scope>
    <scope>TISSUE SPECIFICITY</scope>
    <source>
        <tissue>Testis</tissue>
    </source>
</reference>
<reference key="2">
    <citation type="journal article" date="2004" name="Genome Res.">
        <title>The status, quality, and expansion of the NIH full-length cDNA project: the Mammalian Gene Collection (MGC).</title>
        <authorList>
            <consortium name="The MGC Project Team"/>
        </authorList>
    </citation>
    <scope>NUCLEOTIDE SEQUENCE [LARGE SCALE MRNA]</scope>
    <source>
        <tissue>Testis</tissue>
    </source>
</reference>
<sequence>MAAAGQAEECLPLPAAESSKTSLPTPPAVPAGKKPKKCLVYPHPPRSSRLSRSVLRWLQGLDLSFFPRNVTRDFSNGYLVAEIFCIYYPWDLRLSSFENGTSLKVKLDNWAQIEKFLAKKKFKLPKELIHGTIHCKAGVPEILIQEIYTLLTHQEIRSIQDDLANFTDYIYQMRLPLVPRNTVSKSIKNNIRLSELLSNPNVLSNELKIEFLILLQMLQRKLSRKLNPGWFDVKPTVGEITIDRLPAHSYKRRYKSRGSKEKAAQPLSKSDNDGNARKEIHVKQSGNPCENTENL</sequence>
<protein>
    <recommendedName>
        <fullName>Spermatogenesis-associated protein 4</fullName>
    </recommendedName>
    <alternativeName>
        <fullName>Spermatogenesis-related gene 2 protein</fullName>
    </alternativeName>
    <alternativeName>
        <fullName>Testis and spermatogenesis cell-related protein 2</fullName>
    </alternativeName>
    <alternativeName>
        <fullName>Testis spermatocyte apoptosis-related gene 2 protein</fullName>
    </alternativeName>
</protein>
<gene>
    <name type="primary">Spata4</name>
    <name type="synonym">Srg2</name>
    <name type="synonym">Tsarg2</name>
</gene>
<evidence type="ECO:0000250" key="1">
    <source>
        <dbReference type="UniProtKB" id="Q8NEY3"/>
    </source>
</evidence>
<evidence type="ECO:0000255" key="2">
    <source>
        <dbReference type="PROSITE-ProRule" id="PRU00044"/>
    </source>
</evidence>
<evidence type="ECO:0000256" key="3">
    <source>
        <dbReference type="SAM" id="MobiDB-lite"/>
    </source>
</evidence>
<evidence type="ECO:0000269" key="4">
    <source>
    </source>
</evidence>
<dbReference type="EMBL" id="AF530515">
    <property type="protein sequence ID" value="AAM94341.1"/>
    <property type="molecule type" value="mRNA"/>
</dbReference>
<dbReference type="EMBL" id="AF395083">
    <property type="protein sequence ID" value="AAK77865.2"/>
    <property type="molecule type" value="mRNA"/>
</dbReference>
<dbReference type="EMBL" id="BC048650">
    <property type="protein sequence ID" value="AAH48650.1"/>
    <property type="molecule type" value="mRNA"/>
</dbReference>
<dbReference type="CCDS" id="CCDS22308.1"/>
<dbReference type="RefSeq" id="NP_598472.2">
    <property type="nucleotide sequence ID" value="NM_133711.3"/>
</dbReference>
<dbReference type="SMR" id="Q8K3V1"/>
<dbReference type="FunCoup" id="Q8K3V1">
    <property type="interactions" value="30"/>
</dbReference>
<dbReference type="IntAct" id="Q8K3V1">
    <property type="interactions" value="4"/>
</dbReference>
<dbReference type="MINT" id="Q8K3V1"/>
<dbReference type="STRING" id="10090.ENSMUSP00000033917"/>
<dbReference type="GlyGen" id="Q8K3V1">
    <property type="glycosylation" value="1 site"/>
</dbReference>
<dbReference type="PhosphoSitePlus" id="Q8K3V1"/>
<dbReference type="PaxDb" id="10090-ENSMUSP00000033917"/>
<dbReference type="ProteomicsDB" id="257335"/>
<dbReference type="Antibodypedia" id="17256">
    <property type="antibodies" value="142 antibodies from 26 providers"/>
</dbReference>
<dbReference type="DNASU" id="69281"/>
<dbReference type="Ensembl" id="ENSMUST00000033917.7">
    <property type="protein sequence ID" value="ENSMUSP00000033917.7"/>
    <property type="gene ID" value="ENSMUSG00000031518.7"/>
</dbReference>
<dbReference type="GeneID" id="69281"/>
<dbReference type="KEGG" id="mmu:69281"/>
<dbReference type="UCSC" id="uc009lsf.1">
    <property type="organism name" value="mouse"/>
</dbReference>
<dbReference type="AGR" id="MGI:1916531"/>
<dbReference type="CTD" id="132851"/>
<dbReference type="MGI" id="MGI:1916531">
    <property type="gene designation" value="Spata4"/>
</dbReference>
<dbReference type="VEuPathDB" id="HostDB:ENSMUSG00000031518"/>
<dbReference type="eggNOG" id="ENOG502QU8V">
    <property type="taxonomic scope" value="Eukaryota"/>
</dbReference>
<dbReference type="GeneTree" id="ENSGT00910000144159"/>
<dbReference type="HOGENOM" id="CLU_077979_1_0_1"/>
<dbReference type="InParanoid" id="Q8K3V1"/>
<dbReference type="OMA" id="CIYYPWD"/>
<dbReference type="OrthoDB" id="62528at2759"/>
<dbReference type="PhylomeDB" id="Q8K3V1"/>
<dbReference type="TreeFam" id="TF323506"/>
<dbReference type="BioGRID-ORCS" id="69281">
    <property type="hits" value="2 hits in 77 CRISPR screens"/>
</dbReference>
<dbReference type="ChiTaRS" id="Spata4">
    <property type="organism name" value="mouse"/>
</dbReference>
<dbReference type="PRO" id="PR:Q8K3V1"/>
<dbReference type="Proteomes" id="UP000000589">
    <property type="component" value="Chromosome 8"/>
</dbReference>
<dbReference type="RNAct" id="Q8K3V1">
    <property type="molecule type" value="protein"/>
</dbReference>
<dbReference type="Bgee" id="ENSMUSG00000031518">
    <property type="expression patterns" value="Expressed in seminiferous tubule of testis and 20 other cell types or tissues"/>
</dbReference>
<dbReference type="GO" id="GO:0005737">
    <property type="term" value="C:cytoplasm"/>
    <property type="evidence" value="ECO:0000314"/>
    <property type="project" value="MGI"/>
</dbReference>
<dbReference type="GO" id="GO:0005829">
    <property type="term" value="C:cytosol"/>
    <property type="evidence" value="ECO:0007669"/>
    <property type="project" value="Ensembl"/>
</dbReference>
<dbReference type="GO" id="GO:0005654">
    <property type="term" value="C:nucleoplasm"/>
    <property type="evidence" value="ECO:0007669"/>
    <property type="project" value="Ensembl"/>
</dbReference>
<dbReference type="FunFam" id="1.10.418.10:FF:000061">
    <property type="entry name" value="Spermatogenesis associated 4"/>
    <property type="match status" value="1"/>
</dbReference>
<dbReference type="Gene3D" id="1.10.418.10">
    <property type="entry name" value="Calponin-like domain"/>
    <property type="match status" value="1"/>
</dbReference>
<dbReference type="InterPro" id="IPR010441">
    <property type="entry name" value="CH_2"/>
</dbReference>
<dbReference type="InterPro" id="IPR001715">
    <property type="entry name" value="CH_dom"/>
</dbReference>
<dbReference type="InterPro" id="IPR036872">
    <property type="entry name" value="CH_dom_sf"/>
</dbReference>
<dbReference type="InterPro" id="IPR052111">
    <property type="entry name" value="Spermatogenesis_Ciliary_MAP"/>
</dbReference>
<dbReference type="PANTHER" id="PTHR12509">
    <property type="entry name" value="SPERMATOGENESIS-ASSOCIATED 4-RELATED"/>
    <property type="match status" value="1"/>
</dbReference>
<dbReference type="PANTHER" id="PTHR12509:SF8">
    <property type="entry name" value="SPERMATOGENESIS-ASSOCIATED PROTEIN 4"/>
    <property type="match status" value="1"/>
</dbReference>
<dbReference type="Pfam" id="PF06294">
    <property type="entry name" value="CH_2"/>
    <property type="match status" value="1"/>
</dbReference>
<dbReference type="PROSITE" id="PS50021">
    <property type="entry name" value="CH"/>
    <property type="match status" value="1"/>
</dbReference>